<sequence length="300" mass="34645">MLEKGEHIEYPNTPPLHSPPESHTFSSQTDDSYFHKPSSTGLFATLVADTNSSVPSASRSPESIASSQSNDSAAIPSYRRKRRKVRKPEIVKPTLRKRGRKPKNISTLEHDKSKPVISSLIDEDANLSQIKARKSVLESRFSRLEEAFRDFYIKNLEKTEDLIRTDSHFVLNKELLSFRNDYEHRRKHYEKYSQCLNKQLDHFFSYKVTTVHKSYQRFATLLRRHLLDKTAKRYHDLCEKRPYKYITTDLLSPSLTCFASDILQTVPEYTSSQSSPVLLPATPSIVTNKQMMDDLTLCNV</sequence>
<protein>
    <recommendedName>
        <fullName>Meiotically up-regulated gene 165 protein</fullName>
    </recommendedName>
</protein>
<gene>
    <name type="primary">mug165</name>
    <name type="ORF">SPAC5D6.02c</name>
</gene>
<accession>O14196</accession>
<accession>Q9USA1</accession>
<proteinExistence type="evidence at protein level"/>
<evidence type="ECO:0000256" key="1">
    <source>
        <dbReference type="SAM" id="MobiDB-lite"/>
    </source>
</evidence>
<evidence type="ECO:0000269" key="2">
    <source>
    </source>
</evidence>
<evidence type="ECO:0000269" key="3">
    <source>
    </source>
</evidence>
<evidence type="ECO:0000269" key="4">
    <source>
    </source>
</evidence>
<dbReference type="EMBL" id="CU329670">
    <property type="protein sequence ID" value="CAB10851.1"/>
    <property type="molecule type" value="Genomic_DNA"/>
</dbReference>
<dbReference type="EMBL" id="AB027921">
    <property type="protein sequence ID" value="BAA87225.1"/>
    <property type="molecule type" value="Genomic_DNA"/>
</dbReference>
<dbReference type="PIR" id="T38963">
    <property type="entry name" value="T38963"/>
</dbReference>
<dbReference type="RefSeq" id="NP_593366.1">
    <property type="nucleotide sequence ID" value="NM_001018798.2"/>
</dbReference>
<dbReference type="SMR" id="O14196"/>
<dbReference type="BioGRID" id="278479">
    <property type="interactions" value="6"/>
</dbReference>
<dbReference type="STRING" id="284812.O14196"/>
<dbReference type="iPTMnet" id="O14196"/>
<dbReference type="PaxDb" id="4896-SPAC5D6.02c.1"/>
<dbReference type="EnsemblFungi" id="SPAC5D6.02c.1">
    <property type="protein sequence ID" value="SPAC5D6.02c.1:pep"/>
    <property type="gene ID" value="SPAC5D6.02c"/>
</dbReference>
<dbReference type="GeneID" id="2541995"/>
<dbReference type="KEGG" id="spo:2541995"/>
<dbReference type="PomBase" id="SPAC5D6.02c">
    <property type="gene designation" value="mug165"/>
</dbReference>
<dbReference type="VEuPathDB" id="FungiDB:SPAC5D6.02c"/>
<dbReference type="HOGENOM" id="CLU_927996_0_0_1"/>
<dbReference type="InParanoid" id="O14196"/>
<dbReference type="OMA" id="YQNLCGR"/>
<dbReference type="PRO" id="PR:O14196"/>
<dbReference type="Proteomes" id="UP000002485">
    <property type="component" value="Chromosome I"/>
</dbReference>
<dbReference type="GO" id="GO:0000785">
    <property type="term" value="C:chromatin"/>
    <property type="evidence" value="ECO:0000353"/>
    <property type="project" value="PomBase"/>
</dbReference>
<dbReference type="GO" id="GO:0005634">
    <property type="term" value="C:nucleus"/>
    <property type="evidence" value="ECO:0007005"/>
    <property type="project" value="PomBase"/>
</dbReference>
<dbReference type="GO" id="GO:0051321">
    <property type="term" value="P:meiotic cell cycle"/>
    <property type="evidence" value="ECO:0007669"/>
    <property type="project" value="UniProtKB-KW"/>
</dbReference>
<dbReference type="GO" id="GO:0045815">
    <property type="term" value="P:transcription initiation-coupled chromatin remodeling"/>
    <property type="evidence" value="ECO:0000315"/>
    <property type="project" value="PomBase"/>
</dbReference>
<comment type="function">
    <text evidence="3">Has a role in meiosis.</text>
</comment>
<comment type="subcellular location">
    <subcellularLocation>
        <location evidence="2 4">Nucleus</location>
    </subcellularLocation>
</comment>
<keyword id="KW-0469">Meiosis</keyword>
<keyword id="KW-0539">Nucleus</keyword>
<keyword id="KW-1185">Reference proteome</keyword>
<feature type="chain" id="PRO_0000116653" description="Meiotically up-regulated gene 165 protein">
    <location>
        <begin position="1"/>
        <end position="300"/>
    </location>
</feature>
<feature type="region of interest" description="Disordered" evidence="1">
    <location>
        <begin position="1"/>
        <end position="38"/>
    </location>
</feature>
<feature type="region of interest" description="Disordered" evidence="1">
    <location>
        <begin position="50"/>
        <end position="109"/>
    </location>
</feature>
<feature type="compositionally biased region" description="Polar residues" evidence="1">
    <location>
        <begin position="21"/>
        <end position="38"/>
    </location>
</feature>
<feature type="compositionally biased region" description="Low complexity" evidence="1">
    <location>
        <begin position="52"/>
        <end position="69"/>
    </location>
</feature>
<feature type="compositionally biased region" description="Basic residues" evidence="1">
    <location>
        <begin position="94"/>
        <end position="103"/>
    </location>
</feature>
<organism>
    <name type="scientific">Schizosaccharomyces pombe (strain 972 / ATCC 24843)</name>
    <name type="common">Fission yeast</name>
    <dbReference type="NCBI Taxonomy" id="284812"/>
    <lineage>
        <taxon>Eukaryota</taxon>
        <taxon>Fungi</taxon>
        <taxon>Dikarya</taxon>
        <taxon>Ascomycota</taxon>
        <taxon>Taphrinomycotina</taxon>
        <taxon>Schizosaccharomycetes</taxon>
        <taxon>Schizosaccharomycetales</taxon>
        <taxon>Schizosaccharomycetaceae</taxon>
        <taxon>Schizosaccharomyces</taxon>
    </lineage>
</organism>
<name>MU165_SCHPO</name>
<reference key="1">
    <citation type="journal article" date="2002" name="Nature">
        <title>The genome sequence of Schizosaccharomyces pombe.</title>
        <authorList>
            <person name="Wood V."/>
            <person name="Gwilliam R."/>
            <person name="Rajandream M.A."/>
            <person name="Lyne M.H."/>
            <person name="Lyne R."/>
            <person name="Stewart A."/>
            <person name="Sgouros J.G."/>
            <person name="Peat N."/>
            <person name="Hayles J."/>
            <person name="Baker S.G."/>
            <person name="Basham D."/>
            <person name="Bowman S."/>
            <person name="Brooks K."/>
            <person name="Brown D."/>
            <person name="Brown S."/>
            <person name="Chillingworth T."/>
            <person name="Churcher C.M."/>
            <person name="Collins M."/>
            <person name="Connor R."/>
            <person name="Cronin A."/>
            <person name="Davis P."/>
            <person name="Feltwell T."/>
            <person name="Fraser A."/>
            <person name="Gentles S."/>
            <person name="Goble A."/>
            <person name="Hamlin N."/>
            <person name="Harris D.E."/>
            <person name="Hidalgo J."/>
            <person name="Hodgson G."/>
            <person name="Holroyd S."/>
            <person name="Hornsby T."/>
            <person name="Howarth S."/>
            <person name="Huckle E.J."/>
            <person name="Hunt S."/>
            <person name="Jagels K."/>
            <person name="James K.D."/>
            <person name="Jones L."/>
            <person name="Jones M."/>
            <person name="Leather S."/>
            <person name="McDonald S."/>
            <person name="McLean J."/>
            <person name="Mooney P."/>
            <person name="Moule S."/>
            <person name="Mungall K.L."/>
            <person name="Murphy L.D."/>
            <person name="Niblett D."/>
            <person name="Odell C."/>
            <person name="Oliver K."/>
            <person name="O'Neil S."/>
            <person name="Pearson D."/>
            <person name="Quail M.A."/>
            <person name="Rabbinowitsch E."/>
            <person name="Rutherford K.M."/>
            <person name="Rutter S."/>
            <person name="Saunders D."/>
            <person name="Seeger K."/>
            <person name="Sharp S."/>
            <person name="Skelton J."/>
            <person name="Simmonds M.N."/>
            <person name="Squares R."/>
            <person name="Squares S."/>
            <person name="Stevens K."/>
            <person name="Taylor K."/>
            <person name="Taylor R.G."/>
            <person name="Tivey A."/>
            <person name="Walsh S.V."/>
            <person name="Warren T."/>
            <person name="Whitehead S."/>
            <person name="Woodward J.R."/>
            <person name="Volckaert G."/>
            <person name="Aert R."/>
            <person name="Robben J."/>
            <person name="Grymonprez B."/>
            <person name="Weltjens I."/>
            <person name="Vanstreels E."/>
            <person name="Rieger M."/>
            <person name="Schaefer M."/>
            <person name="Mueller-Auer S."/>
            <person name="Gabel C."/>
            <person name="Fuchs M."/>
            <person name="Duesterhoeft A."/>
            <person name="Fritzc C."/>
            <person name="Holzer E."/>
            <person name="Moestl D."/>
            <person name="Hilbert H."/>
            <person name="Borzym K."/>
            <person name="Langer I."/>
            <person name="Beck A."/>
            <person name="Lehrach H."/>
            <person name="Reinhardt R."/>
            <person name="Pohl T.M."/>
            <person name="Eger P."/>
            <person name="Zimmermann W."/>
            <person name="Wedler H."/>
            <person name="Wambutt R."/>
            <person name="Purnelle B."/>
            <person name="Goffeau A."/>
            <person name="Cadieu E."/>
            <person name="Dreano S."/>
            <person name="Gloux S."/>
            <person name="Lelaure V."/>
            <person name="Mottier S."/>
            <person name="Galibert F."/>
            <person name="Aves S.J."/>
            <person name="Xiang Z."/>
            <person name="Hunt C."/>
            <person name="Moore K."/>
            <person name="Hurst S.M."/>
            <person name="Lucas M."/>
            <person name="Rochet M."/>
            <person name="Gaillardin C."/>
            <person name="Tallada V.A."/>
            <person name="Garzon A."/>
            <person name="Thode G."/>
            <person name="Daga R.R."/>
            <person name="Cruzado L."/>
            <person name="Jimenez J."/>
            <person name="Sanchez M."/>
            <person name="del Rey F."/>
            <person name="Benito J."/>
            <person name="Dominguez A."/>
            <person name="Revuelta J.L."/>
            <person name="Moreno S."/>
            <person name="Armstrong J."/>
            <person name="Forsburg S.L."/>
            <person name="Cerutti L."/>
            <person name="Lowe T."/>
            <person name="McCombie W.R."/>
            <person name="Paulsen I."/>
            <person name="Potashkin J."/>
            <person name="Shpakovski G.V."/>
            <person name="Ussery D."/>
            <person name="Barrell B.G."/>
            <person name="Nurse P."/>
        </authorList>
    </citation>
    <scope>NUCLEOTIDE SEQUENCE [LARGE SCALE GENOMIC DNA]</scope>
    <source>
        <strain>972 / ATCC 24843</strain>
    </source>
</reference>
<reference key="2">
    <citation type="journal article" date="2000" name="Genes Cells">
        <title>Large-scale screening of intracellular protein localization in living fission yeast cells by the use of a GFP-fusion genomic DNA library.</title>
        <authorList>
            <person name="Ding D.-Q."/>
            <person name="Tomita Y."/>
            <person name="Yamamoto A."/>
            <person name="Chikashige Y."/>
            <person name="Haraguchi T."/>
            <person name="Hiraoka Y."/>
        </authorList>
    </citation>
    <scope>NUCLEOTIDE SEQUENCE [LARGE SCALE GENOMIC DNA] OF 1-161</scope>
    <scope>SUBCELLULAR LOCATION</scope>
    <source>
        <strain>ATCC 38364 / 968</strain>
    </source>
</reference>
<reference key="3">
    <citation type="journal article" date="2005" name="Curr. Biol.">
        <title>A large-scale screen in S. pombe identifies seven novel genes required for critical meiotic events.</title>
        <authorList>
            <person name="Martin-Castellanos C."/>
            <person name="Blanco M."/>
            <person name="Rozalen A.E."/>
            <person name="Perez-Hidalgo L."/>
            <person name="Garcia A.I."/>
            <person name="Conde F."/>
            <person name="Mata J."/>
            <person name="Ellermeier C."/>
            <person name="Davis L."/>
            <person name="San-Segundo P."/>
            <person name="Smith G.R."/>
            <person name="Moreno S."/>
        </authorList>
    </citation>
    <scope>FUNCTION IN MEIOSIS</scope>
</reference>
<reference key="4">
    <citation type="journal article" date="2006" name="Nat. Biotechnol.">
        <title>ORFeome cloning and global analysis of protein localization in the fission yeast Schizosaccharomyces pombe.</title>
        <authorList>
            <person name="Matsuyama A."/>
            <person name="Arai R."/>
            <person name="Yashiroda Y."/>
            <person name="Shirai A."/>
            <person name="Kamata A."/>
            <person name="Sekido S."/>
            <person name="Kobayashi Y."/>
            <person name="Hashimoto A."/>
            <person name="Hamamoto M."/>
            <person name="Hiraoka Y."/>
            <person name="Horinouchi S."/>
            <person name="Yoshida M."/>
        </authorList>
    </citation>
    <scope>SUBCELLULAR LOCATION [LARGE SCALE ANALYSIS]</scope>
</reference>